<gene>
    <name evidence="1" type="primary">rpmG</name>
    <name evidence="1" type="synonym">rpl33</name>
    <name type="ordered locus">SynWH7803_1291</name>
</gene>
<keyword id="KW-1185">Reference proteome</keyword>
<keyword id="KW-0687">Ribonucleoprotein</keyword>
<keyword id="KW-0689">Ribosomal protein</keyword>
<evidence type="ECO:0000255" key="1">
    <source>
        <dbReference type="HAMAP-Rule" id="MF_00294"/>
    </source>
</evidence>
<evidence type="ECO:0000305" key="2"/>
<name>RL33_SYNPW</name>
<organism>
    <name type="scientific">Synechococcus sp. (strain WH7803)</name>
    <dbReference type="NCBI Taxonomy" id="32051"/>
    <lineage>
        <taxon>Bacteria</taxon>
        <taxon>Bacillati</taxon>
        <taxon>Cyanobacteriota</taxon>
        <taxon>Cyanophyceae</taxon>
        <taxon>Synechococcales</taxon>
        <taxon>Synechococcaceae</taxon>
        <taxon>Synechococcus</taxon>
    </lineage>
</organism>
<feature type="chain" id="PRO_1000004201" description="Large ribosomal subunit protein bL33">
    <location>
        <begin position="1"/>
        <end position="64"/>
    </location>
</feature>
<comment type="similarity">
    <text evidence="1">Belongs to the bacterial ribosomal protein bL33 family.</text>
</comment>
<sequence length="64" mass="7540">MAKNKGVRIVVTLECTECRSSTEKRSQGVSRYTTEKNRRNTTERLELKKFCPHDNKMTIHKEIK</sequence>
<proteinExistence type="inferred from homology"/>
<reference key="1">
    <citation type="submission" date="2006-05" db="EMBL/GenBank/DDBJ databases">
        <authorList>
            <consortium name="Genoscope"/>
        </authorList>
    </citation>
    <scope>NUCLEOTIDE SEQUENCE [LARGE SCALE GENOMIC DNA]</scope>
    <source>
        <strain>WH7803</strain>
    </source>
</reference>
<protein>
    <recommendedName>
        <fullName evidence="1">Large ribosomal subunit protein bL33</fullName>
    </recommendedName>
    <alternativeName>
        <fullName evidence="2">50S ribosomal protein L33</fullName>
    </alternativeName>
</protein>
<accession>A5GLA2</accession>
<dbReference type="EMBL" id="CT971583">
    <property type="protein sequence ID" value="CAK23717.1"/>
    <property type="molecule type" value="Genomic_DNA"/>
</dbReference>
<dbReference type="SMR" id="A5GLA2"/>
<dbReference type="STRING" id="32051.SynWH7803_1291"/>
<dbReference type="KEGG" id="syx:SynWH7803_1291"/>
<dbReference type="eggNOG" id="COG0267">
    <property type="taxonomic scope" value="Bacteria"/>
</dbReference>
<dbReference type="HOGENOM" id="CLU_190949_3_0_3"/>
<dbReference type="OrthoDB" id="9801333at2"/>
<dbReference type="Proteomes" id="UP000001566">
    <property type="component" value="Chromosome"/>
</dbReference>
<dbReference type="GO" id="GO:0005737">
    <property type="term" value="C:cytoplasm"/>
    <property type="evidence" value="ECO:0007669"/>
    <property type="project" value="UniProtKB-ARBA"/>
</dbReference>
<dbReference type="GO" id="GO:1990904">
    <property type="term" value="C:ribonucleoprotein complex"/>
    <property type="evidence" value="ECO:0007669"/>
    <property type="project" value="UniProtKB-KW"/>
</dbReference>
<dbReference type="GO" id="GO:0005840">
    <property type="term" value="C:ribosome"/>
    <property type="evidence" value="ECO:0007669"/>
    <property type="project" value="UniProtKB-KW"/>
</dbReference>
<dbReference type="GO" id="GO:0003735">
    <property type="term" value="F:structural constituent of ribosome"/>
    <property type="evidence" value="ECO:0007669"/>
    <property type="project" value="InterPro"/>
</dbReference>
<dbReference type="GO" id="GO:0006412">
    <property type="term" value="P:translation"/>
    <property type="evidence" value="ECO:0007669"/>
    <property type="project" value="UniProtKB-UniRule"/>
</dbReference>
<dbReference type="Gene3D" id="2.20.28.120">
    <property type="entry name" value="Ribosomal protein L33"/>
    <property type="match status" value="1"/>
</dbReference>
<dbReference type="HAMAP" id="MF_00294">
    <property type="entry name" value="Ribosomal_bL33"/>
    <property type="match status" value="1"/>
</dbReference>
<dbReference type="InterPro" id="IPR001705">
    <property type="entry name" value="Ribosomal_bL33"/>
</dbReference>
<dbReference type="InterPro" id="IPR018264">
    <property type="entry name" value="Ribosomal_bL33_CS"/>
</dbReference>
<dbReference type="InterPro" id="IPR038584">
    <property type="entry name" value="Ribosomal_bL33_sf"/>
</dbReference>
<dbReference type="InterPro" id="IPR011332">
    <property type="entry name" value="Ribosomal_zn-bd"/>
</dbReference>
<dbReference type="NCBIfam" id="NF001764">
    <property type="entry name" value="PRK00504.1"/>
    <property type="match status" value="1"/>
</dbReference>
<dbReference type="NCBIfam" id="NF001860">
    <property type="entry name" value="PRK00595.1"/>
    <property type="match status" value="1"/>
</dbReference>
<dbReference type="NCBIfam" id="TIGR01023">
    <property type="entry name" value="rpmG_bact"/>
    <property type="match status" value="1"/>
</dbReference>
<dbReference type="PANTHER" id="PTHR43168">
    <property type="entry name" value="50S RIBOSOMAL PROTEIN L33, CHLOROPLASTIC"/>
    <property type="match status" value="1"/>
</dbReference>
<dbReference type="PANTHER" id="PTHR43168:SF2">
    <property type="entry name" value="LARGE RIBOSOMAL SUBUNIT PROTEIN BL33C"/>
    <property type="match status" value="1"/>
</dbReference>
<dbReference type="Pfam" id="PF00471">
    <property type="entry name" value="Ribosomal_L33"/>
    <property type="match status" value="1"/>
</dbReference>
<dbReference type="SUPFAM" id="SSF57829">
    <property type="entry name" value="Zn-binding ribosomal proteins"/>
    <property type="match status" value="1"/>
</dbReference>
<dbReference type="PROSITE" id="PS00582">
    <property type="entry name" value="RIBOSOMAL_L33"/>
    <property type="match status" value="1"/>
</dbReference>